<proteinExistence type="inferred from homology"/>
<comment type="function">
    <text evidence="1">Transfers the 4'-phosphopantetheine moiety from coenzyme A to a Ser of acyl-carrier-protein.</text>
</comment>
<comment type="catalytic activity">
    <reaction evidence="1">
        <text>apo-[ACP] + CoA = holo-[ACP] + adenosine 3',5'-bisphosphate + H(+)</text>
        <dbReference type="Rhea" id="RHEA:12068"/>
        <dbReference type="Rhea" id="RHEA-COMP:9685"/>
        <dbReference type="Rhea" id="RHEA-COMP:9690"/>
        <dbReference type="ChEBI" id="CHEBI:15378"/>
        <dbReference type="ChEBI" id="CHEBI:29999"/>
        <dbReference type="ChEBI" id="CHEBI:57287"/>
        <dbReference type="ChEBI" id="CHEBI:58343"/>
        <dbReference type="ChEBI" id="CHEBI:64479"/>
        <dbReference type="EC" id="2.7.8.7"/>
    </reaction>
</comment>
<comment type="cofactor">
    <cofactor evidence="1">
        <name>Mg(2+)</name>
        <dbReference type="ChEBI" id="CHEBI:18420"/>
    </cofactor>
</comment>
<comment type="subcellular location">
    <subcellularLocation>
        <location evidence="1">Cytoplasm</location>
    </subcellularLocation>
</comment>
<comment type="similarity">
    <text evidence="1">Belongs to the P-Pant transferase superfamily. AcpS family.</text>
</comment>
<keyword id="KW-0963">Cytoplasm</keyword>
<keyword id="KW-0275">Fatty acid biosynthesis</keyword>
<keyword id="KW-0276">Fatty acid metabolism</keyword>
<keyword id="KW-0444">Lipid biosynthesis</keyword>
<keyword id="KW-0443">Lipid metabolism</keyword>
<keyword id="KW-0460">Magnesium</keyword>
<keyword id="KW-0479">Metal-binding</keyword>
<keyword id="KW-0808">Transferase</keyword>
<gene>
    <name evidence="1" type="primary">acpS</name>
    <name type="ordered locus">SZO_16100</name>
</gene>
<sequence length="118" mass="13083">MIVGHGIDLQDISAIEKVYLRNARFARKVLTDKELALFEQFSHHRKMTYLAGRWAGKEAFSKAMGTGIGQLTFQDIEIINDSKGRPVITKSPFQGKAFISISHSGGYVQASVILEDLA</sequence>
<name>ACPS_STRS7</name>
<reference key="1">
    <citation type="journal article" date="2009" name="PLoS Pathog.">
        <title>Genomic evidence for the evolution of Streptococcus equi: host restriction, increased virulence, and genetic exchange with human pathogens.</title>
        <authorList>
            <person name="Holden M.T.G."/>
            <person name="Heather Z."/>
            <person name="Paillot R."/>
            <person name="Steward K.F."/>
            <person name="Webb K."/>
            <person name="Ainslie F."/>
            <person name="Jourdan T."/>
            <person name="Bason N.C."/>
            <person name="Holroyd N.E."/>
            <person name="Mungall K."/>
            <person name="Quail M.A."/>
            <person name="Sanders M."/>
            <person name="Simmonds M."/>
            <person name="Willey D."/>
            <person name="Brooks K."/>
            <person name="Aanensen D.M."/>
            <person name="Spratt B.G."/>
            <person name="Jolley K.A."/>
            <person name="Maiden M.C.J."/>
            <person name="Kehoe M."/>
            <person name="Chanter N."/>
            <person name="Bentley S.D."/>
            <person name="Robinson C."/>
            <person name="Maskell D.J."/>
            <person name="Parkhill J."/>
            <person name="Waller A.S."/>
        </authorList>
    </citation>
    <scope>NUCLEOTIDE SEQUENCE [LARGE SCALE GENOMIC DNA]</scope>
    <source>
        <strain>H70</strain>
    </source>
</reference>
<accession>C0MEB8</accession>
<evidence type="ECO:0000255" key="1">
    <source>
        <dbReference type="HAMAP-Rule" id="MF_00101"/>
    </source>
</evidence>
<protein>
    <recommendedName>
        <fullName evidence="1">Holo-[acyl-carrier-protein] synthase</fullName>
        <shortName evidence="1">Holo-ACP synthase</shortName>
        <ecNumber evidence="1">2.7.8.7</ecNumber>
    </recommendedName>
    <alternativeName>
        <fullName evidence="1">4'-phosphopantetheinyl transferase AcpS</fullName>
    </alternativeName>
</protein>
<organism>
    <name type="scientific">Streptococcus equi subsp. zooepidemicus (strain H70)</name>
    <dbReference type="NCBI Taxonomy" id="553483"/>
    <lineage>
        <taxon>Bacteria</taxon>
        <taxon>Bacillati</taxon>
        <taxon>Bacillota</taxon>
        <taxon>Bacilli</taxon>
        <taxon>Lactobacillales</taxon>
        <taxon>Streptococcaceae</taxon>
        <taxon>Streptococcus</taxon>
    </lineage>
</organism>
<feature type="chain" id="PRO_1000202805" description="Holo-[acyl-carrier-protein] synthase">
    <location>
        <begin position="1"/>
        <end position="118"/>
    </location>
</feature>
<feature type="binding site" evidence="1">
    <location>
        <position position="8"/>
    </location>
    <ligand>
        <name>Mg(2+)</name>
        <dbReference type="ChEBI" id="CHEBI:18420"/>
    </ligand>
</feature>
<feature type="binding site" evidence="1">
    <location>
        <position position="58"/>
    </location>
    <ligand>
        <name>Mg(2+)</name>
        <dbReference type="ChEBI" id="CHEBI:18420"/>
    </ligand>
</feature>
<dbReference type="EC" id="2.7.8.7" evidence="1"/>
<dbReference type="EMBL" id="FM204884">
    <property type="protein sequence ID" value="CAX00344.1"/>
    <property type="molecule type" value="Genomic_DNA"/>
</dbReference>
<dbReference type="SMR" id="C0MEB8"/>
<dbReference type="KEGG" id="seq:SZO_16100"/>
<dbReference type="eggNOG" id="COG0736">
    <property type="taxonomic scope" value="Bacteria"/>
</dbReference>
<dbReference type="HOGENOM" id="CLU_089696_1_2_9"/>
<dbReference type="Proteomes" id="UP000001368">
    <property type="component" value="Chromosome"/>
</dbReference>
<dbReference type="GO" id="GO:0005737">
    <property type="term" value="C:cytoplasm"/>
    <property type="evidence" value="ECO:0007669"/>
    <property type="project" value="UniProtKB-SubCell"/>
</dbReference>
<dbReference type="GO" id="GO:0008897">
    <property type="term" value="F:holo-[acyl-carrier-protein] synthase activity"/>
    <property type="evidence" value="ECO:0007669"/>
    <property type="project" value="UniProtKB-UniRule"/>
</dbReference>
<dbReference type="GO" id="GO:0000287">
    <property type="term" value="F:magnesium ion binding"/>
    <property type="evidence" value="ECO:0007669"/>
    <property type="project" value="UniProtKB-UniRule"/>
</dbReference>
<dbReference type="GO" id="GO:0006633">
    <property type="term" value="P:fatty acid biosynthetic process"/>
    <property type="evidence" value="ECO:0007669"/>
    <property type="project" value="UniProtKB-UniRule"/>
</dbReference>
<dbReference type="Gene3D" id="3.90.470.20">
    <property type="entry name" value="4'-phosphopantetheinyl transferase domain"/>
    <property type="match status" value="1"/>
</dbReference>
<dbReference type="HAMAP" id="MF_00101">
    <property type="entry name" value="AcpS"/>
    <property type="match status" value="1"/>
</dbReference>
<dbReference type="InterPro" id="IPR008278">
    <property type="entry name" value="4-PPantetheinyl_Trfase_dom"/>
</dbReference>
<dbReference type="InterPro" id="IPR037143">
    <property type="entry name" value="4-PPantetheinyl_Trfase_dom_sf"/>
</dbReference>
<dbReference type="InterPro" id="IPR002582">
    <property type="entry name" value="ACPS"/>
</dbReference>
<dbReference type="InterPro" id="IPR004568">
    <property type="entry name" value="Ppantetheine-prot_Trfase_dom"/>
</dbReference>
<dbReference type="NCBIfam" id="TIGR00516">
    <property type="entry name" value="acpS"/>
    <property type="match status" value="1"/>
</dbReference>
<dbReference type="NCBIfam" id="TIGR00556">
    <property type="entry name" value="pantethn_trn"/>
    <property type="match status" value="1"/>
</dbReference>
<dbReference type="Pfam" id="PF01648">
    <property type="entry name" value="ACPS"/>
    <property type="match status" value="1"/>
</dbReference>
<dbReference type="SUPFAM" id="SSF56214">
    <property type="entry name" value="4'-phosphopantetheinyl transferase"/>
    <property type="match status" value="1"/>
</dbReference>